<keyword id="KW-0066">ATP synthesis</keyword>
<keyword id="KW-0067">ATP-binding</keyword>
<keyword id="KW-0138">CF(0)</keyword>
<keyword id="KW-0150">Chloroplast</keyword>
<keyword id="KW-0375">Hydrogen ion transport</keyword>
<keyword id="KW-0406">Ion transport</keyword>
<keyword id="KW-0472">Membrane</keyword>
<keyword id="KW-0547">Nucleotide-binding</keyword>
<keyword id="KW-0934">Plastid</keyword>
<keyword id="KW-0793">Thylakoid</keyword>
<keyword id="KW-0812">Transmembrane</keyword>
<keyword id="KW-1133">Transmembrane helix</keyword>
<keyword id="KW-0813">Transport</keyword>
<evidence type="ECO:0000255" key="1">
    <source>
        <dbReference type="HAMAP-Rule" id="MF_01398"/>
    </source>
</evidence>
<evidence type="ECO:0000305" key="2"/>
<gene>
    <name evidence="1" type="primary">atpF</name>
    <name type="ORF">PA045</name>
</gene>
<organism>
    <name type="scientific">Oryza sativa</name>
    <name type="common">Rice</name>
    <dbReference type="NCBI Taxonomy" id="4530"/>
    <lineage>
        <taxon>Eukaryota</taxon>
        <taxon>Viridiplantae</taxon>
        <taxon>Streptophyta</taxon>
        <taxon>Embryophyta</taxon>
        <taxon>Tracheophyta</taxon>
        <taxon>Spermatophyta</taxon>
        <taxon>Magnoliopsida</taxon>
        <taxon>Liliopsida</taxon>
        <taxon>Poales</taxon>
        <taxon>Poaceae</taxon>
        <taxon>BOP clade</taxon>
        <taxon>Oryzoideae</taxon>
        <taxon>Oryzeae</taxon>
        <taxon>Oryzinae</taxon>
        <taxon>Oryza</taxon>
    </lineage>
</organism>
<feature type="chain" id="PRO_0000082419" description="ATP synthase subunit b, chloroplastic">
    <location>
        <begin position="1"/>
        <end position="183"/>
    </location>
</feature>
<feature type="transmembrane region" description="Helical" evidence="1">
    <location>
        <begin position="27"/>
        <end position="49"/>
    </location>
</feature>
<accession>P0C2Y8</accession>
<accession>P12087</accession>
<accession>Q6QXV1</accession>
<reference key="1">
    <citation type="journal article" date="2004" name="Plant Physiol.">
        <title>A comparison of rice chloroplast genomes.</title>
        <authorList>
            <person name="Tang J."/>
            <person name="Xia H."/>
            <person name="Cao M."/>
            <person name="Zhang X."/>
            <person name="Zeng W."/>
            <person name="Hu S."/>
            <person name="Tong W."/>
            <person name="Wang J."/>
            <person name="Wang J."/>
            <person name="Yu J."/>
            <person name="Yang H."/>
            <person name="Zhu L."/>
        </authorList>
    </citation>
    <scope>NUCLEOTIDE SEQUENCE [LARGE SCALE GENOMIC DNA]</scope>
    <source>
        <strain>cv. PA64s</strain>
    </source>
</reference>
<comment type="function">
    <text evidence="1">F(1)F(0) ATP synthase produces ATP from ADP in the presence of a proton or sodium gradient. F-type ATPases consist of two structural domains, F(1) containing the extramembraneous catalytic core and F(0) containing the membrane proton channel, linked together by a central stalk and a peripheral stalk. During catalysis, ATP synthesis in the catalytic domain of F(1) is coupled via a rotary mechanism of the central stalk subunits to proton translocation.</text>
</comment>
<comment type="function">
    <text evidence="1">Component of the F(0) channel, it forms part of the peripheral stalk, linking F(1) to F(0).</text>
</comment>
<comment type="subunit">
    <text evidence="1">F-type ATPases have 2 components, F(1) - the catalytic core - and F(0) - the membrane proton channel. F(1) has five subunits: alpha(3), beta(3), gamma(1), delta(1), epsilon(1). F(0) has four main subunits: a(1), b(1), b'(1) and c(10-14). The alpha and beta chains form an alternating ring which encloses part of the gamma chain. F(1) is attached to F(0) by a central stalk formed by the gamma and epsilon chains, while a peripheral stalk is formed by the delta, b and b' chains.</text>
</comment>
<comment type="subcellular location">
    <subcellularLocation>
        <location evidence="1">Plastid</location>
        <location evidence="1">Chloroplast thylakoid membrane</location>
        <topology evidence="1">Single-pass membrane protein</topology>
    </subcellularLocation>
</comment>
<comment type="miscellaneous">
    <text>In plastids the F-type ATPase is also known as CF(1)CF(0).</text>
</comment>
<comment type="similarity">
    <text evidence="1">Belongs to the ATPase B chain family.</text>
</comment>
<comment type="sequence caution" evidence="2">
    <conflict type="erroneous gene model prediction">
        <sequence resource="EMBL-CDS" id="AAS46180"/>
    </conflict>
</comment>
<proteinExistence type="inferred from homology"/>
<geneLocation type="chloroplast"/>
<name>ATPF_ORYSA</name>
<protein>
    <recommendedName>
        <fullName evidence="1">ATP synthase subunit b, chloroplastic</fullName>
    </recommendedName>
    <alternativeName>
        <fullName evidence="1">ATP synthase F(0) sector subunit b</fullName>
    </alternativeName>
    <alternativeName>
        <fullName evidence="1">ATPase subunit I</fullName>
    </alternativeName>
</protein>
<sequence>MKNVTHSFVFLAHWPSAGSFGLNTDILATNLINLTVVVGVLIYFGKGVLKDLLDNRKQRILSTIRNSEELRRGTIEQLEKARIRLQKVELEADEYRMNGYSEIEREKANLINATSISLEQLEKSKNETLYFEKQRAMNQVRQRVFQQAVQGALGTLNSCLNTELHFRTIRANISILGAMEWKS</sequence>
<dbReference type="EMBL" id="AY522331">
    <property type="protein sequence ID" value="AAS46180.1"/>
    <property type="status" value="ALT_SEQ"/>
    <property type="molecule type" value="Genomic_DNA"/>
</dbReference>
<dbReference type="RefSeq" id="YP_009305300.1">
    <property type="nucleotide sequence ID" value="NC_031333.1"/>
</dbReference>
<dbReference type="SMR" id="P0C2Y8"/>
<dbReference type="GeneID" id="29141357"/>
<dbReference type="GO" id="GO:0009535">
    <property type="term" value="C:chloroplast thylakoid membrane"/>
    <property type="evidence" value="ECO:0007669"/>
    <property type="project" value="UniProtKB-SubCell"/>
</dbReference>
<dbReference type="GO" id="GO:0009536">
    <property type="term" value="C:plastid"/>
    <property type="evidence" value="ECO:0000305"/>
    <property type="project" value="Gramene"/>
</dbReference>
<dbReference type="GO" id="GO:0045259">
    <property type="term" value="C:proton-transporting ATP synthase complex"/>
    <property type="evidence" value="ECO:0007669"/>
    <property type="project" value="UniProtKB-KW"/>
</dbReference>
<dbReference type="GO" id="GO:0005524">
    <property type="term" value="F:ATP binding"/>
    <property type="evidence" value="ECO:0007669"/>
    <property type="project" value="UniProtKB-KW"/>
</dbReference>
<dbReference type="GO" id="GO:0046933">
    <property type="term" value="F:proton-transporting ATP synthase activity, rotational mechanism"/>
    <property type="evidence" value="ECO:0007669"/>
    <property type="project" value="UniProtKB-UniRule"/>
</dbReference>
<dbReference type="CDD" id="cd06503">
    <property type="entry name" value="ATP-synt_Fo_b"/>
    <property type="match status" value="1"/>
</dbReference>
<dbReference type="HAMAP" id="MF_01398">
    <property type="entry name" value="ATP_synth_b_bprime"/>
    <property type="match status" value="1"/>
</dbReference>
<dbReference type="InterPro" id="IPR002146">
    <property type="entry name" value="ATP_synth_b/b'su_bac/chlpt"/>
</dbReference>
<dbReference type="PANTHER" id="PTHR34264">
    <property type="entry name" value="ATP SYNTHASE SUBUNIT B, CHLOROPLASTIC"/>
    <property type="match status" value="1"/>
</dbReference>
<dbReference type="PANTHER" id="PTHR34264:SF8">
    <property type="entry name" value="ATP SYNTHASE SUBUNIT B, CHLOROPLASTIC"/>
    <property type="match status" value="1"/>
</dbReference>
<dbReference type="Pfam" id="PF00430">
    <property type="entry name" value="ATP-synt_B"/>
    <property type="match status" value="1"/>
</dbReference>